<protein>
    <recommendedName>
        <fullName evidence="1">Shutoff protein</fullName>
    </recommendedName>
    <alternativeName>
        <fullName evidence="1">100 kDa protein</fullName>
        <shortName evidence="1">p100K</shortName>
    </alternativeName>
    <alternativeName>
        <fullName evidence="1">100K-chaperone protein</fullName>
    </alternativeName>
    <alternativeName>
        <fullName evidence="1">L4-100K</fullName>
    </alternativeName>
    <alternativeName>
        <fullName evidence="1">Shutoff protein 100K</fullName>
    </alternativeName>
</protein>
<dbReference type="EMBL" id="M73260">
    <property type="protein sequence ID" value="AAA96412.1"/>
    <property type="status" value="ALT_SEQ"/>
    <property type="molecule type" value="Genomic_DNA"/>
</dbReference>
<dbReference type="EMBL" id="X02997">
    <property type="protein sequence ID" value="CAA26756.1"/>
    <property type="molecule type" value="Genomic_DNA"/>
</dbReference>
<dbReference type="PIR" id="A39449">
    <property type="entry name" value="WMAD15"/>
</dbReference>
<dbReference type="RefSeq" id="AP_000214.1">
    <property type="nucleotide sequence ID" value="AC_000008.1"/>
</dbReference>
<dbReference type="IntAct" id="P24933">
    <property type="interactions" value="1"/>
</dbReference>
<dbReference type="MINT" id="P24933"/>
<dbReference type="Proteomes" id="UP000004992">
    <property type="component" value="Genome"/>
</dbReference>
<dbReference type="GO" id="GO:0043657">
    <property type="term" value="C:host cell"/>
    <property type="evidence" value="ECO:0007669"/>
    <property type="project" value="GOC"/>
</dbReference>
<dbReference type="GO" id="GO:0030430">
    <property type="term" value="C:host cell cytoplasm"/>
    <property type="evidence" value="ECO:0007669"/>
    <property type="project" value="UniProtKB-SubCell"/>
</dbReference>
<dbReference type="GO" id="GO:0046729">
    <property type="term" value="C:viral procapsid"/>
    <property type="evidence" value="ECO:0000315"/>
    <property type="project" value="CACAO"/>
</dbReference>
<dbReference type="GO" id="GO:0003723">
    <property type="term" value="F:RNA binding"/>
    <property type="evidence" value="ECO:0007669"/>
    <property type="project" value="UniProtKB-UniRule"/>
</dbReference>
<dbReference type="GO" id="GO:0019060">
    <property type="term" value="P:intracellular transport of viral protein in host cell"/>
    <property type="evidence" value="ECO:0007669"/>
    <property type="project" value="UniProtKB-UniRule"/>
</dbReference>
<dbReference type="GO" id="GO:0039657">
    <property type="term" value="P:symbiont-mediated suppression of host gene expression"/>
    <property type="evidence" value="ECO:0007669"/>
    <property type="project" value="UniProtKB-UniRule"/>
</dbReference>
<dbReference type="GO" id="GO:0039606">
    <property type="term" value="P:symbiont-mediated suppression of host translation initiation"/>
    <property type="evidence" value="ECO:0007669"/>
    <property type="project" value="UniProtKB-KW"/>
</dbReference>
<dbReference type="GO" id="GO:0039704">
    <property type="term" value="P:viral translational shunt"/>
    <property type="evidence" value="ECO:0000250"/>
    <property type="project" value="UniProtKB"/>
</dbReference>
<dbReference type="HAMAP" id="MF_04060">
    <property type="entry name" value="ADV_SHUT"/>
    <property type="match status" value="1"/>
</dbReference>
<dbReference type="InterPro" id="IPR003381">
    <property type="entry name" value="L4"/>
</dbReference>
<dbReference type="Pfam" id="PF02438">
    <property type="entry name" value="Adeno_100"/>
    <property type="match status" value="1"/>
</dbReference>
<organismHost>
    <name type="scientific">Homo sapiens</name>
    <name type="common">Human</name>
    <dbReference type="NCBI Taxonomy" id="9606"/>
</organismHost>
<reference key="1">
    <citation type="journal article" date="1992" name="Virology">
        <title>The sequence of the genome of adenovirus type 5 and its comparison with the genome of adenovirus type 2.</title>
        <authorList>
            <person name="Chroboczek J."/>
            <person name="Bieber F."/>
            <person name="Jacrot B."/>
        </authorList>
    </citation>
    <scope>NUCLEOTIDE SEQUENCE [GENOMIC DNA]</scope>
</reference>
<reference key="2">
    <citation type="journal article" date="1981" name="Nucleic Acids Res.">
        <title>Structure and organization of the gene coding for the DNA binding protein of adenovirus type 5.</title>
        <authorList>
            <person name="Kruijer W."/>
            <person name="van Schaik F.M.A."/>
            <person name="Sussenbach J.S."/>
        </authorList>
    </citation>
    <scope>NUCLEOTIDE SEQUENCE [GENOMIC DNA] OF 1-593</scope>
</reference>
<reference key="3">
    <citation type="journal article" date="2012" name="Nat. Methods">
        <title>De novo derivation of proteomes from transcriptomes for transcript and protein identification.</title>
        <authorList>
            <person name="Evans V.C."/>
            <person name="Barker G."/>
            <person name="Heesom K.J."/>
            <person name="Fan J."/>
            <person name="Bessant C."/>
            <person name="Matthews D.A."/>
        </authorList>
    </citation>
    <scope>NUCLEOTIDE SEQUENCE [MRNA]</scope>
</reference>
<reference key="4">
    <citation type="journal article" date="2003" name="EMBO J.">
        <title>Switch from capsid protein import to adenovirus assembly by cleavage of nuclear transport signals.</title>
        <authorList>
            <person name="Wodrich H."/>
            <person name="Guan T."/>
            <person name="Cingolani G."/>
            <person name="Von Seggern D."/>
            <person name="Nemerow G."/>
            <person name="Gerace L."/>
        </authorList>
    </citation>
    <scope>SUBCELLULAR LOCATION</scope>
</reference>
<reference key="5">
    <citation type="journal article" date="2009" name="J. Virol.">
        <title>Arginine methylation of human adenovirus type 5 L4 100-kilodalton protein is required for efficient virus production.</title>
        <authorList>
            <person name="Koyuncu O.O."/>
            <person name="Dobner T."/>
        </authorList>
    </citation>
    <scope>METHYLATION AT ARG/GLY REGION</scope>
</reference>
<reference key="6">
    <citation type="journal article" date="2011" name="Cell. Mol. Life Sci.">
        <title>Faithful chaperones.</title>
        <authorList>
            <person name="Szolajska E."/>
            <person name="Chroboczek J."/>
        </authorList>
    </citation>
    <scope>REVIEW</scope>
</reference>
<name>SHUT_ADE05</name>
<evidence type="ECO:0000255" key="1">
    <source>
        <dbReference type="HAMAP-Rule" id="MF_04060"/>
    </source>
</evidence>
<evidence type="ECO:0000256" key="2">
    <source>
        <dbReference type="SAM" id="MobiDB-lite"/>
    </source>
</evidence>
<evidence type="ECO:0000269" key="3">
    <source>
    </source>
</evidence>
<evidence type="ECO:0000269" key="4">
    <source>
    </source>
</evidence>
<accession>P24933</accession>
<accession>P03268</accession>
<feature type="chain" id="PRO_0000221856" description="Shutoff protein">
    <location>
        <begin position="1"/>
        <end position="807"/>
    </location>
</feature>
<feature type="domain" description="RRM" evidence="1">
    <location>
        <begin position="348"/>
        <end position="466"/>
    </location>
</feature>
<feature type="region of interest" description="Disordered" evidence="2">
    <location>
        <begin position="1"/>
        <end position="88"/>
    </location>
</feature>
<feature type="region of interest" description="Binding to host EIF4G" evidence="1">
    <location>
        <begin position="280"/>
        <end position="345"/>
    </location>
</feature>
<feature type="region of interest" description="Disordered" evidence="2">
    <location>
        <begin position="684"/>
        <end position="807"/>
    </location>
</feature>
<feature type="compositionally biased region" description="Polar residues" evidence="2">
    <location>
        <begin position="16"/>
        <end position="29"/>
    </location>
</feature>
<feature type="compositionally biased region" description="Basic and acidic residues" evidence="2">
    <location>
        <begin position="59"/>
        <end position="70"/>
    </location>
</feature>
<feature type="compositionally biased region" description="Basic and acidic residues" evidence="2">
    <location>
        <begin position="79"/>
        <end position="88"/>
    </location>
</feature>
<feature type="compositionally biased region" description="Gly residues" evidence="2">
    <location>
        <begin position="726"/>
        <end position="743"/>
    </location>
</feature>
<feature type="compositionally biased region" description="Basic and acidic residues" evidence="2">
    <location>
        <begin position="744"/>
        <end position="755"/>
    </location>
</feature>
<feature type="compositionally biased region" description="Basic residues" evidence="2">
    <location>
        <begin position="756"/>
        <end position="765"/>
    </location>
</feature>
<feature type="modified residue" description="Phosphotyrosine; by host" evidence="1">
    <location>
        <position position="365"/>
    </location>
</feature>
<feature type="modified residue" description="Phosphotyrosine; by host" evidence="1">
    <location>
        <position position="682"/>
    </location>
</feature>
<organism>
    <name type="scientific">Human adenovirus C serotype 5</name>
    <name type="common">HAdV-5</name>
    <name type="synonym">Human adenovirus 5</name>
    <dbReference type="NCBI Taxonomy" id="28285"/>
    <lineage>
        <taxon>Viruses</taxon>
        <taxon>Varidnaviria</taxon>
        <taxon>Bamfordvirae</taxon>
        <taxon>Preplasmiviricota</taxon>
        <taxon>Tectiliviricetes</taxon>
        <taxon>Rowavirales</taxon>
        <taxon>Adenoviridae</taxon>
        <taxon>Mastadenovirus</taxon>
        <taxon>Human mastadenovirus C</taxon>
    </lineage>
</organism>
<sequence length="807" mass="90213">MESVEKKDSLTAPSEFATTASTDAANAPTTFPVEAPPLEEEEVIIEQDPGFVSEDDEDRSVPTEDKKQDQDNAEANEEQVGRGDERHGDYLDVGDDVLLKHLQRQCAIICDALQERSDVPLAIADVSLAYERHLFSPRVPPKRQENGTCEPNPRLNFYPVFAVPEVLATYHIFFQNCKIPLSCRANRSRADKQLALRQGAVIPDIASLNEVPKIFEGLGRDEKRAANALQQENSENESHSGVLVELEGDNARLAVLKRSIEVTHFAYPALNLPPKVMSTVMSELIVRRAQPLERDANLQEQTEEGLPAVGDEQLARWLQTREPADLEERRKLMMAAVLVTVELECMQRFFADPEMQRKLEETLHYTFRQGYVRQACKISNVELCNLVSYLGILHENRLGQNVLHSTLKGEARRDYVRDCVYLFLCYTWQTAMGVWQQCLEECNLKELQKLLKQNLKDLWTAFNERSVAAHLADIIFPERLLKTLQQGLPDFTSQSMLQNFRNFILERSGILPATCCALPSDFVPIKYRECPPPLWGHCYLLQLANYLAYHSDIMEDVSGDGLLECHCRCNLCTPHRSLVCNSQLLNESQIIGTFELQGPSPDEKSAAPGLKLTPGLWTSAYLRKFVPEDYHAHEIRFYEDQSRPPNAELTACVITQGHILGQLQAINKARQEFLLRKGRGVYLDPQSGEELNPIPPPPQPYQQQPRALASQDGTQKEAAAAAATHGRGGILGQSGRGGFGRGGGGHDGRLGEPRRGSFRGRRGVRRNTVTLGRIPLAGAPEIGNRFQHGYNLRSSGAAGTARSPTQP</sequence>
<keyword id="KW-0143">Chaperone</keyword>
<keyword id="KW-1262">Eukaryotic host gene expression shutoff by virus</keyword>
<keyword id="KW-1193">Eukaryotic host translation shutoff by virus</keyword>
<keyword id="KW-1035">Host cytoplasm</keyword>
<keyword id="KW-1190">Host gene expression shutoff by virus</keyword>
<keyword id="KW-0945">Host-virus interaction</keyword>
<keyword id="KW-1075">Inhibition of eukaryotic host translation factors by virus</keyword>
<keyword id="KW-0426">Late protein</keyword>
<keyword id="KW-0488">Methylation</keyword>
<keyword id="KW-0597">Phosphoprotein</keyword>
<keyword id="KW-1185">Reference proteome</keyword>
<keyword id="KW-0694">RNA-binding</keyword>
<keyword id="KW-1155">Translational shunt</keyword>
<keyword id="KW-0813">Transport</keyword>
<comment type="function">
    <text evidence="1">Protein that inhibits host translation while promoting late viral translation by ribosome shunting. Blocks host cap-dependent translation by binding to eIF4G, displacing MKNK1 from cap initiation complexes and preventing EIF4E phosphorylation. Binds to the tripartite leader sequence of viral late mRNAs and recruits host eIF4G, PABPC1/poly-A binding protein and 40S ribosomes subunits on viral mRNAs, allowing ribosome shunting and efficient translation of late viral mRNAs even though conventional translation via ribosome scanning from the cap has been shut off in the host cell. During assembly, acts as a chaperone protein that helps hexon proteins assembly into trimers.</text>
</comment>
<comment type="subunit">
    <text evidence="1">Monomer. Interacts with hexon protein; this interaction allows chaperoning and trimerization of hexon proteins. Interacts (via N-terminus) with host initiation factor EIF4G (via C-terminus). Interacts (via RRM domain) with viral mRNAs that contain the tripartite leader; this interaction allows ribosome shunting and expression of viral late mRNAs.</text>
</comment>
<comment type="subcellular location">
    <subcellularLocation>
        <location evidence="1 3">Host cytoplasm</location>
    </subcellularLocation>
</comment>
<comment type="induction">
    <text evidence="1">Expressed in the late phase of the viral replicative cycle.</text>
</comment>
<comment type="PTM">
    <text evidence="1">Might be cleaved by the viral protease.</text>
</comment>
<comment type="PTM">
    <text evidence="1">Phosphorylated. Tyrosine phosphorylation enhances preferential binding to tripartite leader mRNAs and allows ribosome shunting.</text>
</comment>
<comment type="PTM">
    <text evidence="1 4">Methylated. Asymmetric dimethylation by host PRMT1 of the Arg/Gly-rich region may regulate shutoff protein binding to hexon and promote the capsid assembly in the nucleus.</text>
</comment>
<comment type="miscellaneous">
    <text evidence="1">All late proteins expressed from the major late promoter are produced by alternative splicing and alternative polyadenylation of the same gene giving rise to non-overlapping ORFs. A leader sequence is present in the N-terminus of all these mRNAs and is recognized by the viral shutoff protein to provide expression although conventional translation via ribosome scanning from the cap has been shut off in the host cell.</text>
</comment>
<comment type="similarity">
    <text evidence="1">Belongs to the adenoviridae shutoff protein family.</text>
</comment>
<proteinExistence type="evidence at protein level"/>
<gene>
    <name evidence="1" type="primary">L4</name>
</gene>